<sequence>MSQLVYFSSSSENTQRFIERLGLPAVRIPLNERERIQVDEPYILIVPSYGGGGTAGAVPRQVIRFLNDEHNRALLRGVIASGNRNFGEAYGRAGDVIARKCSVPWLYRFELMGTQSDIENVRKGVTEFWQRQPQNA</sequence>
<proteinExistence type="inferred from homology"/>
<feature type="chain" id="PRO_1000016499" description="Protein NrdI">
    <location>
        <begin position="1"/>
        <end position="136"/>
    </location>
</feature>
<dbReference type="EMBL" id="CP000468">
    <property type="protein sequence ID" value="ABJ02109.1"/>
    <property type="molecule type" value="Genomic_DNA"/>
</dbReference>
<dbReference type="RefSeq" id="WP_000080951.1">
    <property type="nucleotide sequence ID" value="NZ_CADILS010000021.1"/>
</dbReference>
<dbReference type="SMR" id="A1AEL9"/>
<dbReference type="KEGG" id="ecv:APECO1_3847"/>
<dbReference type="HOGENOM" id="CLU_114845_0_0_6"/>
<dbReference type="Proteomes" id="UP000008216">
    <property type="component" value="Chromosome"/>
</dbReference>
<dbReference type="GO" id="GO:0010181">
    <property type="term" value="F:FMN binding"/>
    <property type="evidence" value="ECO:0007669"/>
    <property type="project" value="InterPro"/>
</dbReference>
<dbReference type="GO" id="GO:0036211">
    <property type="term" value="P:protein modification process"/>
    <property type="evidence" value="ECO:0007669"/>
    <property type="project" value="InterPro"/>
</dbReference>
<dbReference type="FunFam" id="3.40.50.360:FF:000005">
    <property type="entry name" value="Protein NrdI"/>
    <property type="match status" value="1"/>
</dbReference>
<dbReference type="Gene3D" id="3.40.50.360">
    <property type="match status" value="1"/>
</dbReference>
<dbReference type="HAMAP" id="MF_00128">
    <property type="entry name" value="NrdI"/>
    <property type="match status" value="1"/>
</dbReference>
<dbReference type="InterPro" id="IPR029039">
    <property type="entry name" value="Flavoprotein-like_sf"/>
</dbReference>
<dbReference type="InterPro" id="IPR020852">
    <property type="entry name" value="RNR_Ib_NrdI_bac"/>
</dbReference>
<dbReference type="InterPro" id="IPR004465">
    <property type="entry name" value="RNR_NrdI"/>
</dbReference>
<dbReference type="NCBIfam" id="TIGR00333">
    <property type="entry name" value="nrdI"/>
    <property type="match status" value="1"/>
</dbReference>
<dbReference type="PANTHER" id="PTHR37297">
    <property type="entry name" value="PROTEIN NRDI"/>
    <property type="match status" value="1"/>
</dbReference>
<dbReference type="PANTHER" id="PTHR37297:SF1">
    <property type="entry name" value="PROTEIN NRDI"/>
    <property type="match status" value="1"/>
</dbReference>
<dbReference type="Pfam" id="PF07972">
    <property type="entry name" value="Flavodoxin_NdrI"/>
    <property type="match status" value="1"/>
</dbReference>
<dbReference type="PIRSF" id="PIRSF005087">
    <property type="entry name" value="NrdI"/>
    <property type="match status" value="1"/>
</dbReference>
<dbReference type="SUPFAM" id="SSF52218">
    <property type="entry name" value="Flavoproteins"/>
    <property type="match status" value="1"/>
</dbReference>
<accession>A1AEL9</accession>
<comment type="function">
    <text evidence="1">Probably involved in ribonucleotide reductase function.</text>
</comment>
<comment type="similarity">
    <text evidence="1">Belongs to the NrdI family.</text>
</comment>
<evidence type="ECO:0000255" key="1">
    <source>
        <dbReference type="HAMAP-Rule" id="MF_00128"/>
    </source>
</evidence>
<reference key="1">
    <citation type="journal article" date="2007" name="J. Bacteriol.">
        <title>The genome sequence of avian pathogenic Escherichia coli strain O1:K1:H7 shares strong similarities with human extraintestinal pathogenic E. coli genomes.</title>
        <authorList>
            <person name="Johnson T.J."/>
            <person name="Kariyawasam S."/>
            <person name="Wannemuehler Y."/>
            <person name="Mangiamele P."/>
            <person name="Johnson S.J."/>
            <person name="Doetkott C."/>
            <person name="Skyberg J.A."/>
            <person name="Lynne A.M."/>
            <person name="Johnson J.R."/>
            <person name="Nolan L.K."/>
        </authorList>
    </citation>
    <scope>NUCLEOTIDE SEQUENCE [LARGE SCALE GENOMIC DNA]</scope>
</reference>
<protein>
    <recommendedName>
        <fullName evidence="1">Protein NrdI</fullName>
    </recommendedName>
</protein>
<gene>
    <name evidence="1" type="primary">nrdI</name>
    <name type="ordered locus">Ecok1_26150</name>
    <name type="ORF">APECO1_3847</name>
</gene>
<organism>
    <name type="scientific">Escherichia coli O1:K1 / APEC</name>
    <dbReference type="NCBI Taxonomy" id="405955"/>
    <lineage>
        <taxon>Bacteria</taxon>
        <taxon>Pseudomonadati</taxon>
        <taxon>Pseudomonadota</taxon>
        <taxon>Gammaproteobacteria</taxon>
        <taxon>Enterobacterales</taxon>
        <taxon>Enterobacteriaceae</taxon>
        <taxon>Escherichia</taxon>
    </lineage>
</organism>
<name>NRDI_ECOK1</name>
<keyword id="KW-1185">Reference proteome</keyword>